<sequence>MEKLPDLATLKYNEQGLIPAIAQQYDTGEVLMMAWMNQTSLAETLSTGVACYWSRSRNRFWRKGESSGQVQTVKAVRLDCDKDTLLLLVDQQGVACHTGRHNCFYLEAQDGSWKTITDPEIDPEELYGK</sequence>
<protein>
    <recommendedName>
        <fullName evidence="1">Phosphoribosyl-AMP cyclohydrolase</fullName>
        <shortName evidence="1">PRA-CH</shortName>
        <ecNumber evidence="1">3.5.4.19</ecNumber>
    </recommendedName>
</protein>
<feature type="chain" id="PRO_0000319695" description="Phosphoribosyl-AMP cyclohydrolase">
    <location>
        <begin position="1"/>
        <end position="129"/>
    </location>
</feature>
<feature type="binding site" evidence="1">
    <location>
        <position position="79"/>
    </location>
    <ligand>
        <name>Mg(2+)</name>
        <dbReference type="ChEBI" id="CHEBI:18420"/>
    </ligand>
</feature>
<feature type="binding site" evidence="1">
    <location>
        <position position="80"/>
    </location>
    <ligand>
        <name>Zn(2+)</name>
        <dbReference type="ChEBI" id="CHEBI:29105"/>
        <note>ligand shared between dimeric partners</note>
    </ligand>
</feature>
<feature type="binding site" evidence="1">
    <location>
        <position position="81"/>
    </location>
    <ligand>
        <name>Mg(2+)</name>
        <dbReference type="ChEBI" id="CHEBI:18420"/>
    </ligand>
</feature>
<feature type="binding site" evidence="1">
    <location>
        <position position="83"/>
    </location>
    <ligand>
        <name>Mg(2+)</name>
        <dbReference type="ChEBI" id="CHEBI:18420"/>
    </ligand>
</feature>
<feature type="binding site" evidence="1">
    <location>
        <position position="96"/>
    </location>
    <ligand>
        <name>Zn(2+)</name>
        <dbReference type="ChEBI" id="CHEBI:29105"/>
        <note>ligand shared between dimeric partners</note>
    </ligand>
</feature>
<feature type="binding site" evidence="1">
    <location>
        <position position="103"/>
    </location>
    <ligand>
        <name>Zn(2+)</name>
        <dbReference type="ChEBI" id="CHEBI:29105"/>
        <note>ligand shared between dimeric partners</note>
    </ligand>
</feature>
<accession>A0LCF4</accession>
<dbReference type="EC" id="3.5.4.19" evidence="1"/>
<dbReference type="EMBL" id="CP000471">
    <property type="protein sequence ID" value="ABK45647.1"/>
    <property type="molecule type" value="Genomic_DNA"/>
</dbReference>
<dbReference type="RefSeq" id="WP_011714710.1">
    <property type="nucleotide sequence ID" value="NC_008576.1"/>
</dbReference>
<dbReference type="SMR" id="A0LCF4"/>
<dbReference type="STRING" id="156889.Mmc1_3157"/>
<dbReference type="KEGG" id="mgm:Mmc1_3157"/>
<dbReference type="eggNOG" id="COG0139">
    <property type="taxonomic scope" value="Bacteria"/>
</dbReference>
<dbReference type="HOGENOM" id="CLU_048577_5_2_5"/>
<dbReference type="OrthoDB" id="9795769at2"/>
<dbReference type="UniPathway" id="UPA00031">
    <property type="reaction ID" value="UER00008"/>
</dbReference>
<dbReference type="Proteomes" id="UP000002586">
    <property type="component" value="Chromosome"/>
</dbReference>
<dbReference type="GO" id="GO:0005737">
    <property type="term" value="C:cytoplasm"/>
    <property type="evidence" value="ECO:0007669"/>
    <property type="project" value="UniProtKB-SubCell"/>
</dbReference>
<dbReference type="GO" id="GO:0000287">
    <property type="term" value="F:magnesium ion binding"/>
    <property type="evidence" value="ECO:0007669"/>
    <property type="project" value="UniProtKB-UniRule"/>
</dbReference>
<dbReference type="GO" id="GO:0004635">
    <property type="term" value="F:phosphoribosyl-AMP cyclohydrolase activity"/>
    <property type="evidence" value="ECO:0007669"/>
    <property type="project" value="UniProtKB-UniRule"/>
</dbReference>
<dbReference type="GO" id="GO:0008270">
    <property type="term" value="F:zinc ion binding"/>
    <property type="evidence" value="ECO:0007669"/>
    <property type="project" value="UniProtKB-UniRule"/>
</dbReference>
<dbReference type="GO" id="GO:0000105">
    <property type="term" value="P:L-histidine biosynthetic process"/>
    <property type="evidence" value="ECO:0007669"/>
    <property type="project" value="UniProtKB-UniRule"/>
</dbReference>
<dbReference type="FunFam" id="3.10.20.810:FF:000001">
    <property type="entry name" value="Histidine biosynthesis bifunctional protein HisIE"/>
    <property type="match status" value="1"/>
</dbReference>
<dbReference type="Gene3D" id="3.10.20.810">
    <property type="entry name" value="Phosphoribosyl-AMP cyclohydrolase"/>
    <property type="match status" value="1"/>
</dbReference>
<dbReference type="HAMAP" id="MF_01021">
    <property type="entry name" value="HisI"/>
    <property type="match status" value="1"/>
</dbReference>
<dbReference type="InterPro" id="IPR026660">
    <property type="entry name" value="PRA-CH"/>
</dbReference>
<dbReference type="InterPro" id="IPR002496">
    <property type="entry name" value="PRib_AMP_CycHydrolase_dom"/>
</dbReference>
<dbReference type="InterPro" id="IPR038019">
    <property type="entry name" value="PRib_AMP_CycHydrolase_sf"/>
</dbReference>
<dbReference type="NCBIfam" id="NF000768">
    <property type="entry name" value="PRK00051.1"/>
    <property type="match status" value="1"/>
</dbReference>
<dbReference type="PANTHER" id="PTHR42945">
    <property type="entry name" value="HISTIDINE BIOSYNTHESIS BIFUNCTIONAL PROTEIN"/>
    <property type="match status" value="1"/>
</dbReference>
<dbReference type="PANTHER" id="PTHR42945:SF1">
    <property type="entry name" value="HISTIDINE BIOSYNTHESIS BIFUNCTIONAL PROTEIN HIS7"/>
    <property type="match status" value="1"/>
</dbReference>
<dbReference type="Pfam" id="PF01502">
    <property type="entry name" value="PRA-CH"/>
    <property type="match status" value="1"/>
</dbReference>
<dbReference type="SUPFAM" id="SSF141734">
    <property type="entry name" value="HisI-like"/>
    <property type="match status" value="1"/>
</dbReference>
<evidence type="ECO:0000255" key="1">
    <source>
        <dbReference type="HAMAP-Rule" id="MF_01021"/>
    </source>
</evidence>
<reference key="1">
    <citation type="journal article" date="2009" name="Appl. Environ. Microbiol.">
        <title>Complete genome sequence of the chemolithoautotrophic marine magnetotactic coccus strain MC-1.</title>
        <authorList>
            <person name="Schubbe S."/>
            <person name="Williams T.J."/>
            <person name="Xie G."/>
            <person name="Kiss H.E."/>
            <person name="Brettin T.S."/>
            <person name="Martinez D."/>
            <person name="Ross C.A."/>
            <person name="Schuler D."/>
            <person name="Cox B.L."/>
            <person name="Nealson K.H."/>
            <person name="Bazylinski D.A."/>
        </authorList>
    </citation>
    <scope>NUCLEOTIDE SEQUENCE [LARGE SCALE GENOMIC DNA]</scope>
    <source>
        <strain>ATCC BAA-1437 / JCM 17883 / MC-1</strain>
    </source>
</reference>
<name>HIS3_MAGMM</name>
<proteinExistence type="inferred from homology"/>
<keyword id="KW-0028">Amino-acid biosynthesis</keyword>
<keyword id="KW-0963">Cytoplasm</keyword>
<keyword id="KW-0368">Histidine biosynthesis</keyword>
<keyword id="KW-0378">Hydrolase</keyword>
<keyword id="KW-0460">Magnesium</keyword>
<keyword id="KW-0479">Metal-binding</keyword>
<keyword id="KW-1185">Reference proteome</keyword>
<keyword id="KW-0862">Zinc</keyword>
<gene>
    <name evidence="1" type="primary">hisI</name>
    <name type="ordered locus">Mmc1_3157</name>
</gene>
<comment type="function">
    <text evidence="1">Catalyzes the hydrolysis of the adenine ring of phosphoribosyl-AMP.</text>
</comment>
<comment type="catalytic activity">
    <reaction evidence="1">
        <text>1-(5-phospho-beta-D-ribosyl)-5'-AMP + H2O = 1-(5-phospho-beta-D-ribosyl)-5-[(5-phospho-beta-D-ribosylamino)methylideneamino]imidazole-4-carboxamide</text>
        <dbReference type="Rhea" id="RHEA:20049"/>
        <dbReference type="ChEBI" id="CHEBI:15377"/>
        <dbReference type="ChEBI" id="CHEBI:58435"/>
        <dbReference type="ChEBI" id="CHEBI:59457"/>
        <dbReference type="EC" id="3.5.4.19"/>
    </reaction>
</comment>
<comment type="cofactor">
    <cofactor evidence="1">
        <name>Mg(2+)</name>
        <dbReference type="ChEBI" id="CHEBI:18420"/>
    </cofactor>
    <text evidence="1">Binds 1 Mg(2+) ion per subunit.</text>
</comment>
<comment type="cofactor">
    <cofactor evidence="1">
        <name>Zn(2+)</name>
        <dbReference type="ChEBI" id="CHEBI:29105"/>
    </cofactor>
    <text evidence="1">Binds 1 zinc ion per subunit.</text>
</comment>
<comment type="pathway">
    <text evidence="1">Amino-acid biosynthesis; L-histidine biosynthesis; L-histidine from 5-phospho-alpha-D-ribose 1-diphosphate: step 3/9.</text>
</comment>
<comment type="subunit">
    <text evidence="1">Homodimer.</text>
</comment>
<comment type="subcellular location">
    <subcellularLocation>
        <location evidence="1">Cytoplasm</location>
    </subcellularLocation>
</comment>
<comment type="similarity">
    <text evidence="1">Belongs to the PRA-CH family.</text>
</comment>
<organism>
    <name type="scientific">Magnetococcus marinus (strain ATCC BAA-1437 / JCM 17883 / MC-1)</name>
    <dbReference type="NCBI Taxonomy" id="156889"/>
    <lineage>
        <taxon>Bacteria</taxon>
        <taxon>Pseudomonadati</taxon>
        <taxon>Pseudomonadota</taxon>
        <taxon>Alphaproteobacteria</taxon>
        <taxon>Magnetococcales</taxon>
        <taxon>Magnetococcaceae</taxon>
        <taxon>Magnetococcus</taxon>
    </lineage>
</organism>